<protein>
    <recommendedName>
        <fullName>Thioredoxin H4</fullName>
        <shortName>AtTrxh4</shortName>
    </recommendedName>
    <alternativeName>
        <fullName>Thioredoxin 4</fullName>
        <shortName>AtTRX4</shortName>
    </alternativeName>
</protein>
<comment type="function">
    <text evidence="4">Thiol-disulfide oxidoreductase probably involved in the redox regulation of a number of cytosolic enzymes. Possesses insulin disulfide bonds reducing activity.</text>
</comment>
<comment type="subunit">
    <text evidence="5">Interacts with MDH1.</text>
</comment>
<comment type="subcellular location">
    <subcellularLocation>
        <location evidence="1">Cytoplasm</location>
    </subcellularLocation>
</comment>
<comment type="similarity">
    <text evidence="6">Belongs to the thioredoxin family. Plant H-type subfamily.</text>
</comment>
<comment type="caution">
    <text evidence="6">The active site contains a CPPC motif which differs from the conserved CGPC motif.</text>
</comment>
<comment type="sequence caution" evidence="6">
    <conflict type="frameshift">
        <sequence resource="EMBL-CDS" id="CAA84610"/>
    </conflict>
</comment>
<dbReference type="EMBL" id="Z35473">
    <property type="protein sequence ID" value="CAA84610.1"/>
    <property type="status" value="ALT_FRAME"/>
    <property type="molecule type" value="mRNA"/>
</dbReference>
<dbReference type="EMBL" id="AC007797">
    <property type="protein sequence ID" value="AAG12565.1"/>
    <property type="molecule type" value="Genomic_DNA"/>
</dbReference>
<dbReference type="EMBL" id="AC024609">
    <property type="status" value="NOT_ANNOTATED_CDS"/>
    <property type="molecule type" value="Genomic_DNA"/>
</dbReference>
<dbReference type="EMBL" id="CP002684">
    <property type="protein sequence ID" value="AEE29892.1"/>
    <property type="molecule type" value="Genomic_DNA"/>
</dbReference>
<dbReference type="EMBL" id="AK118542">
    <property type="protein sequence ID" value="BAC43145.1"/>
    <property type="molecule type" value="mRNA"/>
</dbReference>
<dbReference type="EMBL" id="BT004710">
    <property type="protein sequence ID" value="AAO42956.1"/>
    <property type="molecule type" value="mRNA"/>
</dbReference>
<dbReference type="EMBL" id="AY088698">
    <property type="protein sequence ID" value="AAM67018.1"/>
    <property type="molecule type" value="mRNA"/>
</dbReference>
<dbReference type="EMBL" id="U35828">
    <property type="protein sequence ID" value="AAC49355.1"/>
    <property type="molecule type" value="Genomic_DNA"/>
</dbReference>
<dbReference type="PIR" id="D86330">
    <property type="entry name" value="D86330"/>
</dbReference>
<dbReference type="PIR" id="S58119">
    <property type="entry name" value="S58119"/>
</dbReference>
<dbReference type="RefSeq" id="NP_173403.1">
    <property type="nucleotide sequence ID" value="NM_101829.4"/>
</dbReference>
<dbReference type="SMR" id="Q39239"/>
<dbReference type="BioGRID" id="23801">
    <property type="interactions" value="1"/>
</dbReference>
<dbReference type="FunCoup" id="Q39239">
    <property type="interactions" value="2154"/>
</dbReference>
<dbReference type="STRING" id="3702.Q39239"/>
<dbReference type="SwissPalm" id="Q39239"/>
<dbReference type="PaxDb" id="3702-AT1G19730.1"/>
<dbReference type="ProteomicsDB" id="228705"/>
<dbReference type="EnsemblPlants" id="AT1G19730.1">
    <property type="protein sequence ID" value="AT1G19730.1"/>
    <property type="gene ID" value="AT1G19730"/>
</dbReference>
<dbReference type="GeneID" id="838562"/>
<dbReference type="Gramene" id="AT1G19730.1">
    <property type="protein sequence ID" value="AT1G19730.1"/>
    <property type="gene ID" value="AT1G19730"/>
</dbReference>
<dbReference type="KEGG" id="ath:AT1G19730"/>
<dbReference type="Araport" id="AT1G19730"/>
<dbReference type="TAIR" id="AT1G19730">
    <property type="gene designation" value="ATTRX4"/>
</dbReference>
<dbReference type="eggNOG" id="KOG0907">
    <property type="taxonomic scope" value="Eukaryota"/>
</dbReference>
<dbReference type="HOGENOM" id="CLU_090389_14_1_1"/>
<dbReference type="InParanoid" id="Q39239"/>
<dbReference type="OMA" id="SATWCAN"/>
<dbReference type="OrthoDB" id="10263751at2759"/>
<dbReference type="PhylomeDB" id="Q39239"/>
<dbReference type="PRO" id="PR:Q39239"/>
<dbReference type="Proteomes" id="UP000006548">
    <property type="component" value="Chromosome 1"/>
</dbReference>
<dbReference type="ExpressionAtlas" id="Q39239">
    <property type="expression patterns" value="baseline and differential"/>
</dbReference>
<dbReference type="GO" id="GO:0005829">
    <property type="term" value="C:cytosol"/>
    <property type="evidence" value="ECO:0007005"/>
    <property type="project" value="TAIR"/>
</dbReference>
<dbReference type="GO" id="GO:0016671">
    <property type="term" value="F:oxidoreductase activity, acting on a sulfur group of donors, disulfide as acceptor"/>
    <property type="evidence" value="ECO:0000314"/>
    <property type="project" value="TAIR"/>
</dbReference>
<dbReference type="GO" id="GO:0015035">
    <property type="term" value="F:protein-disulfide reductase activity"/>
    <property type="evidence" value="ECO:0007669"/>
    <property type="project" value="InterPro"/>
</dbReference>
<dbReference type="CDD" id="cd02947">
    <property type="entry name" value="TRX_family"/>
    <property type="match status" value="1"/>
</dbReference>
<dbReference type="FunFam" id="3.40.30.10:FF:000104">
    <property type="entry name" value="Thioredoxin"/>
    <property type="match status" value="1"/>
</dbReference>
<dbReference type="Gene3D" id="3.40.30.10">
    <property type="entry name" value="Glutaredoxin"/>
    <property type="match status" value="1"/>
</dbReference>
<dbReference type="InterPro" id="IPR005746">
    <property type="entry name" value="Thioredoxin"/>
</dbReference>
<dbReference type="InterPro" id="IPR036249">
    <property type="entry name" value="Thioredoxin-like_sf"/>
</dbReference>
<dbReference type="InterPro" id="IPR017937">
    <property type="entry name" value="Thioredoxin_CS"/>
</dbReference>
<dbReference type="InterPro" id="IPR013766">
    <property type="entry name" value="Thioredoxin_domain"/>
</dbReference>
<dbReference type="InterPro" id="IPR050620">
    <property type="entry name" value="Thioredoxin_H-type-like"/>
</dbReference>
<dbReference type="NCBIfam" id="TIGR01068">
    <property type="entry name" value="thioredoxin"/>
    <property type="match status" value="1"/>
</dbReference>
<dbReference type="PANTHER" id="PTHR10438">
    <property type="entry name" value="THIOREDOXIN"/>
    <property type="match status" value="1"/>
</dbReference>
<dbReference type="PANTHER" id="PTHR10438:SF453">
    <property type="entry name" value="THIOREDOXIN H4-RELATED"/>
    <property type="match status" value="1"/>
</dbReference>
<dbReference type="Pfam" id="PF00085">
    <property type="entry name" value="Thioredoxin"/>
    <property type="match status" value="1"/>
</dbReference>
<dbReference type="PRINTS" id="PR00421">
    <property type="entry name" value="THIOREDOXIN"/>
</dbReference>
<dbReference type="SUPFAM" id="SSF52833">
    <property type="entry name" value="Thioredoxin-like"/>
    <property type="match status" value="1"/>
</dbReference>
<dbReference type="PROSITE" id="PS00194">
    <property type="entry name" value="THIOREDOXIN_1"/>
    <property type="match status" value="1"/>
</dbReference>
<dbReference type="PROSITE" id="PS51352">
    <property type="entry name" value="THIOREDOXIN_2"/>
    <property type="match status" value="1"/>
</dbReference>
<name>TRXH4_ARATH</name>
<organism>
    <name type="scientific">Arabidopsis thaliana</name>
    <name type="common">Mouse-ear cress</name>
    <dbReference type="NCBI Taxonomy" id="3702"/>
    <lineage>
        <taxon>Eukaryota</taxon>
        <taxon>Viridiplantae</taxon>
        <taxon>Streptophyta</taxon>
        <taxon>Embryophyta</taxon>
        <taxon>Tracheophyta</taxon>
        <taxon>Spermatophyta</taxon>
        <taxon>Magnoliopsida</taxon>
        <taxon>eudicotyledons</taxon>
        <taxon>Gunneridae</taxon>
        <taxon>Pentapetalae</taxon>
        <taxon>rosids</taxon>
        <taxon>malvids</taxon>
        <taxon>Brassicales</taxon>
        <taxon>Brassicaceae</taxon>
        <taxon>Camelineae</taxon>
        <taxon>Arabidopsis</taxon>
    </lineage>
</organism>
<evidence type="ECO:0000250" key="1"/>
<evidence type="ECO:0000255" key="2"/>
<evidence type="ECO:0000255" key="3">
    <source>
        <dbReference type="PROSITE-ProRule" id="PRU00691"/>
    </source>
</evidence>
<evidence type="ECO:0000269" key="4">
    <source>
    </source>
</evidence>
<evidence type="ECO:0000269" key="5">
    <source>
    </source>
</evidence>
<evidence type="ECO:0000305" key="6"/>
<keyword id="KW-0963">Cytoplasm</keyword>
<keyword id="KW-1015">Disulfide bond</keyword>
<keyword id="KW-0249">Electron transport</keyword>
<keyword id="KW-0676">Redox-active center</keyword>
<keyword id="KW-1185">Reference proteome</keyword>
<keyword id="KW-0813">Transport</keyword>
<sequence length="119" mass="13063">MAAEEGQVIGCHTNDVWTVQLDKAKESNKLIVIDFTASWCPPCRMIAPIFNDLAKKFMSSAIFFKVDVDELQSVAKEFGVEAMPTFVFIKAGEVVDKLVGANKEDLQAKIVKHTGVTTA</sequence>
<proteinExistence type="evidence at protein level"/>
<accession>Q39239</accession>
<accession>Q38880</accession>
<accession>Q541W4</accession>
<accession>Q8L907</accession>
<accession>Q9FXH2</accession>
<feature type="chain" id="PRO_0000120049" description="Thioredoxin H4">
    <location>
        <begin position="1"/>
        <end position="119"/>
    </location>
</feature>
<feature type="domain" description="Thioredoxin" evidence="3">
    <location>
        <begin position="2"/>
        <end position="115"/>
    </location>
</feature>
<feature type="active site" description="Nucleophile" evidence="2">
    <location>
        <position position="40"/>
    </location>
</feature>
<feature type="active site" description="Nucleophile" evidence="2">
    <location>
        <position position="43"/>
    </location>
</feature>
<feature type="disulfide bond" description="Redox-active" evidence="3">
    <location>
        <begin position="40"/>
        <end position="43"/>
    </location>
</feature>
<feature type="sequence conflict" description="In Ref. 6; AAM67018." evidence="6" ref="6">
    <original>G</original>
    <variation>S</variation>
    <location>
        <position position="10"/>
    </location>
</feature>
<feature type="sequence conflict" description="In Ref. 1; CAA84610." evidence="6" ref="1">
    <original>A</original>
    <variation>VVNQFEA</variation>
    <location>
        <position position="119"/>
    </location>
</feature>
<reference key="1">
    <citation type="journal article" date="1995" name="Proc. Natl. Acad. Sci. U.S.A.">
        <title>Evidence for five divergent thioredoxin h sequences in Arabidopsis thaliana.</title>
        <authorList>
            <person name="Rivera-Madrid R."/>
            <person name="Mestres D."/>
            <person name="Marinho P."/>
            <person name="Jacquot J.-P."/>
            <person name="Decottignies P."/>
            <person name="Miginiac-Maslow M."/>
            <person name="Meyer Y."/>
        </authorList>
    </citation>
    <scope>NUCLEOTIDE SEQUENCE [MRNA]</scope>
    <source>
        <strain>cv. Columbia</strain>
        <tissue>Flower bud</tissue>
    </source>
</reference>
<reference key="2">
    <citation type="journal article" date="2000" name="Nature">
        <title>Sequence and analysis of chromosome 1 of the plant Arabidopsis thaliana.</title>
        <authorList>
            <person name="Theologis A."/>
            <person name="Ecker J.R."/>
            <person name="Palm C.J."/>
            <person name="Federspiel N.A."/>
            <person name="Kaul S."/>
            <person name="White O."/>
            <person name="Alonso J."/>
            <person name="Altafi H."/>
            <person name="Araujo R."/>
            <person name="Bowman C.L."/>
            <person name="Brooks S.Y."/>
            <person name="Buehler E."/>
            <person name="Chan A."/>
            <person name="Chao Q."/>
            <person name="Chen H."/>
            <person name="Cheuk R.F."/>
            <person name="Chin C.W."/>
            <person name="Chung M.K."/>
            <person name="Conn L."/>
            <person name="Conway A.B."/>
            <person name="Conway A.R."/>
            <person name="Creasy T.H."/>
            <person name="Dewar K."/>
            <person name="Dunn P."/>
            <person name="Etgu P."/>
            <person name="Feldblyum T.V."/>
            <person name="Feng J.-D."/>
            <person name="Fong B."/>
            <person name="Fujii C.Y."/>
            <person name="Gill J.E."/>
            <person name="Goldsmith A.D."/>
            <person name="Haas B."/>
            <person name="Hansen N.F."/>
            <person name="Hughes B."/>
            <person name="Huizar L."/>
            <person name="Hunter J.L."/>
            <person name="Jenkins J."/>
            <person name="Johnson-Hopson C."/>
            <person name="Khan S."/>
            <person name="Khaykin E."/>
            <person name="Kim C.J."/>
            <person name="Koo H.L."/>
            <person name="Kremenetskaia I."/>
            <person name="Kurtz D.B."/>
            <person name="Kwan A."/>
            <person name="Lam B."/>
            <person name="Langin-Hooper S."/>
            <person name="Lee A."/>
            <person name="Lee J.M."/>
            <person name="Lenz C.A."/>
            <person name="Li J.H."/>
            <person name="Li Y.-P."/>
            <person name="Lin X."/>
            <person name="Liu S.X."/>
            <person name="Liu Z.A."/>
            <person name="Luros J.S."/>
            <person name="Maiti R."/>
            <person name="Marziali A."/>
            <person name="Militscher J."/>
            <person name="Miranda M."/>
            <person name="Nguyen M."/>
            <person name="Nierman W.C."/>
            <person name="Osborne B.I."/>
            <person name="Pai G."/>
            <person name="Peterson J."/>
            <person name="Pham P.K."/>
            <person name="Rizzo M."/>
            <person name="Rooney T."/>
            <person name="Rowley D."/>
            <person name="Sakano H."/>
            <person name="Salzberg S.L."/>
            <person name="Schwartz J.R."/>
            <person name="Shinn P."/>
            <person name="Southwick A.M."/>
            <person name="Sun H."/>
            <person name="Tallon L.J."/>
            <person name="Tambunga G."/>
            <person name="Toriumi M.J."/>
            <person name="Town C.D."/>
            <person name="Utterback T."/>
            <person name="Van Aken S."/>
            <person name="Vaysberg M."/>
            <person name="Vysotskaia V.S."/>
            <person name="Walker M."/>
            <person name="Wu D."/>
            <person name="Yu G."/>
            <person name="Fraser C.M."/>
            <person name="Venter J.C."/>
            <person name="Davis R.W."/>
        </authorList>
    </citation>
    <scope>NUCLEOTIDE SEQUENCE [LARGE SCALE GENOMIC DNA]</scope>
    <source>
        <strain>cv. Columbia</strain>
    </source>
</reference>
<reference key="3">
    <citation type="journal article" date="2017" name="Plant J.">
        <title>Araport11: a complete reannotation of the Arabidopsis thaliana reference genome.</title>
        <authorList>
            <person name="Cheng C.Y."/>
            <person name="Krishnakumar V."/>
            <person name="Chan A.P."/>
            <person name="Thibaud-Nissen F."/>
            <person name="Schobel S."/>
            <person name="Town C.D."/>
        </authorList>
    </citation>
    <scope>GENOME REANNOTATION</scope>
    <source>
        <strain>cv. Columbia</strain>
    </source>
</reference>
<reference key="4">
    <citation type="journal article" date="2002" name="Science">
        <title>Functional annotation of a full-length Arabidopsis cDNA collection.</title>
        <authorList>
            <person name="Seki M."/>
            <person name="Narusaka M."/>
            <person name="Kamiya A."/>
            <person name="Ishida J."/>
            <person name="Satou M."/>
            <person name="Sakurai T."/>
            <person name="Nakajima M."/>
            <person name="Enju A."/>
            <person name="Akiyama K."/>
            <person name="Oono Y."/>
            <person name="Muramatsu M."/>
            <person name="Hayashizaki Y."/>
            <person name="Kawai J."/>
            <person name="Carninci P."/>
            <person name="Itoh M."/>
            <person name="Ishii Y."/>
            <person name="Arakawa T."/>
            <person name="Shibata K."/>
            <person name="Shinagawa A."/>
            <person name="Shinozaki K."/>
        </authorList>
    </citation>
    <scope>NUCLEOTIDE SEQUENCE [LARGE SCALE MRNA]</scope>
    <source>
        <strain>cv. Columbia</strain>
    </source>
</reference>
<reference key="5">
    <citation type="journal article" date="2003" name="Science">
        <title>Empirical analysis of transcriptional activity in the Arabidopsis genome.</title>
        <authorList>
            <person name="Yamada K."/>
            <person name="Lim J."/>
            <person name="Dale J.M."/>
            <person name="Chen H."/>
            <person name="Shinn P."/>
            <person name="Palm C.J."/>
            <person name="Southwick A.M."/>
            <person name="Wu H.C."/>
            <person name="Kim C.J."/>
            <person name="Nguyen M."/>
            <person name="Pham P.K."/>
            <person name="Cheuk R.F."/>
            <person name="Karlin-Newmann G."/>
            <person name="Liu S.X."/>
            <person name="Lam B."/>
            <person name="Sakano H."/>
            <person name="Wu T."/>
            <person name="Yu G."/>
            <person name="Miranda M."/>
            <person name="Quach H.L."/>
            <person name="Tripp M."/>
            <person name="Chang C.H."/>
            <person name="Lee J.M."/>
            <person name="Toriumi M.J."/>
            <person name="Chan M.M."/>
            <person name="Tang C.C."/>
            <person name="Onodera C.S."/>
            <person name="Deng J.M."/>
            <person name="Akiyama K."/>
            <person name="Ansari Y."/>
            <person name="Arakawa T."/>
            <person name="Banh J."/>
            <person name="Banno F."/>
            <person name="Bowser L."/>
            <person name="Brooks S.Y."/>
            <person name="Carninci P."/>
            <person name="Chao Q."/>
            <person name="Choy N."/>
            <person name="Enju A."/>
            <person name="Goldsmith A.D."/>
            <person name="Gurjal M."/>
            <person name="Hansen N.F."/>
            <person name="Hayashizaki Y."/>
            <person name="Johnson-Hopson C."/>
            <person name="Hsuan V.W."/>
            <person name="Iida K."/>
            <person name="Karnes M."/>
            <person name="Khan S."/>
            <person name="Koesema E."/>
            <person name="Ishida J."/>
            <person name="Jiang P.X."/>
            <person name="Jones T."/>
            <person name="Kawai J."/>
            <person name="Kamiya A."/>
            <person name="Meyers C."/>
            <person name="Nakajima M."/>
            <person name="Narusaka M."/>
            <person name="Seki M."/>
            <person name="Sakurai T."/>
            <person name="Satou M."/>
            <person name="Tamse R."/>
            <person name="Vaysberg M."/>
            <person name="Wallender E.K."/>
            <person name="Wong C."/>
            <person name="Yamamura Y."/>
            <person name="Yuan S."/>
            <person name="Shinozaki K."/>
            <person name="Davis R.W."/>
            <person name="Theologis A."/>
            <person name="Ecker J.R."/>
        </authorList>
    </citation>
    <scope>NUCLEOTIDE SEQUENCE [LARGE SCALE MRNA]</scope>
    <source>
        <strain>cv. Columbia</strain>
    </source>
</reference>
<reference key="6">
    <citation type="submission" date="2002-03" db="EMBL/GenBank/DDBJ databases">
        <title>Full-length cDNA from Arabidopsis thaliana.</title>
        <authorList>
            <person name="Brover V.V."/>
            <person name="Troukhan M.E."/>
            <person name="Alexandrov N.A."/>
            <person name="Lu Y.-P."/>
            <person name="Flavell R.B."/>
            <person name="Feldmann K.A."/>
        </authorList>
    </citation>
    <scope>NUCLEOTIDE SEQUENCE [LARGE SCALE MRNA]</scope>
</reference>
<reference key="7">
    <citation type="journal article" date="1996" name="J. Mol. Evol.">
        <title>Intron position as an evolutionary marker of thioredoxins and thioredoxin domains.</title>
        <authorList>
            <person name="Sahrawy M."/>
            <person name="Hecht V."/>
            <person name="Lopez Jaramillo J."/>
            <person name="Chueca A."/>
            <person name="Chartier Y."/>
            <person name="Meyer Y."/>
        </authorList>
    </citation>
    <scope>NUCLEOTIDE SEQUENCE [GENOMIC DNA] OF 1-110</scope>
    <source>
        <strain>cv. Landsberg erecta</strain>
    </source>
</reference>
<reference key="8">
    <citation type="journal article" date="2004" name="Plant Cell Physiol.">
        <title>Target proteins of the cytosolic thioredoxins in Arabidopsis thaliana.</title>
        <authorList>
            <person name="Yamazaki D."/>
            <person name="Motohashi K."/>
            <person name="Kasama T."/>
            <person name="Hara Y."/>
            <person name="Hisabori T."/>
        </authorList>
    </citation>
    <scope>FUNCTION</scope>
</reference>
<reference key="9">
    <citation type="journal article" date="2009" name="Mol. Plant">
        <title>Comparative genomic study of the thioredoxin family in photosynthetic organisms with emphasis on Populus trichocarpa.</title>
        <authorList>
            <person name="Chibani K."/>
            <person name="Wingsle G."/>
            <person name="Jacquot J.P."/>
            <person name="Gelhaye E."/>
            <person name="Rouhier N."/>
        </authorList>
    </citation>
    <scope>GENE FAMILY</scope>
    <scope>NOMENCLATURE</scope>
</reference>
<reference key="10">
    <citation type="journal article" date="2018" name="J. Exp. Bot.">
        <title>Self-protection of cytosolic malate dehydrogenase against oxidative stress in Arabidopsis.</title>
        <authorList>
            <person name="Huang J."/>
            <person name="Niazi A.K."/>
            <person name="Young D."/>
            <person name="Rosado L.A."/>
            <person name="Vertommen D."/>
            <person name="Bodra N."/>
            <person name="Abdelgawwad M.R."/>
            <person name="Vignols F."/>
            <person name="Wei B."/>
            <person name="Wahni K."/>
            <person name="Bashandy T."/>
            <person name="Bariat L."/>
            <person name="Van Breusegem F."/>
            <person name="Messens J."/>
            <person name="Reichheld J.P."/>
        </authorList>
    </citation>
    <scope>INTERACTION WITH MDH1</scope>
</reference>
<gene>
    <name type="primary">TRX4</name>
    <name type="ordered locus">At1g19730</name>
    <name type="ORF">F14P1.32</name>
    <name type="ORF">F6F9.21</name>
</gene>